<sequence length="61" mass="6554">MSEDKGMKDKAKGLKDKVVGDAKDKFGKATDDKGKQVEGKAQKAKGEVEDKTGDAKKKLSE</sequence>
<organism>
    <name type="scientific">Listeria monocytogenes serovar 1/2a (strain ATCC BAA-679 / EGD-e)</name>
    <dbReference type="NCBI Taxonomy" id="169963"/>
    <lineage>
        <taxon>Bacteria</taxon>
        <taxon>Bacillati</taxon>
        <taxon>Bacillota</taxon>
        <taxon>Bacilli</taxon>
        <taxon>Bacillales</taxon>
        <taxon>Listeriaceae</taxon>
        <taxon>Listeria</taxon>
    </lineage>
</organism>
<protein>
    <recommendedName>
        <fullName>UPF0337 protein lmo2158</fullName>
    </recommendedName>
</protein>
<comment type="similarity">
    <text evidence="2">Belongs to the UPF0337 (CsbD) family.</text>
</comment>
<keyword id="KW-1185">Reference proteome</keyword>
<evidence type="ECO:0000256" key="1">
    <source>
        <dbReference type="SAM" id="MobiDB-lite"/>
    </source>
</evidence>
<evidence type="ECO:0000305" key="2"/>
<proteinExistence type="inferred from homology"/>
<accession>Q929L4</accession>
<reference key="1">
    <citation type="journal article" date="2001" name="Science">
        <title>Comparative genomics of Listeria species.</title>
        <authorList>
            <person name="Glaser P."/>
            <person name="Frangeul L."/>
            <person name="Buchrieser C."/>
            <person name="Rusniok C."/>
            <person name="Amend A."/>
            <person name="Baquero F."/>
            <person name="Berche P."/>
            <person name="Bloecker H."/>
            <person name="Brandt P."/>
            <person name="Chakraborty T."/>
            <person name="Charbit A."/>
            <person name="Chetouani F."/>
            <person name="Couve E."/>
            <person name="de Daruvar A."/>
            <person name="Dehoux P."/>
            <person name="Domann E."/>
            <person name="Dominguez-Bernal G."/>
            <person name="Duchaud E."/>
            <person name="Durant L."/>
            <person name="Dussurget O."/>
            <person name="Entian K.-D."/>
            <person name="Fsihi H."/>
            <person name="Garcia-del Portillo F."/>
            <person name="Garrido P."/>
            <person name="Gautier L."/>
            <person name="Goebel W."/>
            <person name="Gomez-Lopez N."/>
            <person name="Hain T."/>
            <person name="Hauf J."/>
            <person name="Jackson D."/>
            <person name="Jones L.-M."/>
            <person name="Kaerst U."/>
            <person name="Kreft J."/>
            <person name="Kuhn M."/>
            <person name="Kunst F."/>
            <person name="Kurapkat G."/>
            <person name="Madueno E."/>
            <person name="Maitournam A."/>
            <person name="Mata Vicente J."/>
            <person name="Ng E."/>
            <person name="Nedjari H."/>
            <person name="Nordsiek G."/>
            <person name="Novella S."/>
            <person name="de Pablos B."/>
            <person name="Perez-Diaz J.-C."/>
            <person name="Purcell R."/>
            <person name="Remmel B."/>
            <person name="Rose M."/>
            <person name="Schlueter T."/>
            <person name="Simoes N."/>
            <person name="Tierrez A."/>
            <person name="Vazquez-Boland J.-A."/>
            <person name="Voss H."/>
            <person name="Wehland J."/>
            <person name="Cossart P."/>
        </authorList>
    </citation>
    <scope>NUCLEOTIDE SEQUENCE [LARGE SCALE GENOMIC DNA]</scope>
    <source>
        <strain>ATCC BAA-679 / EGD-e</strain>
    </source>
</reference>
<name>Y2158_LISMO</name>
<feature type="chain" id="PRO_0000210010" description="UPF0337 protein lmo2158">
    <location>
        <begin position="1"/>
        <end position="61"/>
    </location>
</feature>
<feature type="region of interest" description="Disordered" evidence="1">
    <location>
        <begin position="1"/>
        <end position="61"/>
    </location>
</feature>
<gene>
    <name type="ordered locus">lmo2158</name>
</gene>
<dbReference type="EMBL" id="AL591982">
    <property type="protein sequence ID" value="CAD00236.1"/>
    <property type="molecule type" value="Genomic_DNA"/>
</dbReference>
<dbReference type="PIR" id="AI1714">
    <property type="entry name" value="AI1714"/>
</dbReference>
<dbReference type="RefSeq" id="NP_465682.1">
    <property type="nucleotide sequence ID" value="NC_003210.1"/>
</dbReference>
<dbReference type="RefSeq" id="WP_003722282.1">
    <property type="nucleotide sequence ID" value="NZ_CP149495.1"/>
</dbReference>
<dbReference type="SMR" id="Q929L4"/>
<dbReference type="EnsemblBacteria" id="CAD00236">
    <property type="protein sequence ID" value="CAD00236"/>
    <property type="gene ID" value="CAD00236"/>
</dbReference>
<dbReference type="GeneID" id="984441"/>
<dbReference type="KEGG" id="lmo:lmo2158"/>
<dbReference type="PATRIC" id="fig|169963.11.peg.2210"/>
<dbReference type="eggNOG" id="COG3237">
    <property type="taxonomic scope" value="Bacteria"/>
</dbReference>
<dbReference type="HOGENOM" id="CLU_135567_3_0_9"/>
<dbReference type="OrthoDB" id="2941817at2"/>
<dbReference type="PhylomeDB" id="Q929L4"/>
<dbReference type="BioCyc" id="LMON169963:LMO2158-MONOMER"/>
<dbReference type="Proteomes" id="UP000000817">
    <property type="component" value="Chromosome"/>
</dbReference>
<dbReference type="Gene3D" id="1.10.1470.10">
    <property type="entry name" value="YjbJ"/>
    <property type="match status" value="1"/>
</dbReference>
<dbReference type="InterPro" id="IPR008462">
    <property type="entry name" value="CsbD"/>
</dbReference>
<dbReference type="InterPro" id="IPR036629">
    <property type="entry name" value="YjbJ_sf"/>
</dbReference>
<dbReference type="Pfam" id="PF05532">
    <property type="entry name" value="CsbD"/>
    <property type="match status" value="1"/>
</dbReference>
<dbReference type="SUPFAM" id="SSF69047">
    <property type="entry name" value="Hypothetical protein YjbJ"/>
    <property type="match status" value="1"/>
</dbReference>